<keyword id="KW-0963">Cytoplasm</keyword>
<keyword id="KW-0238">DNA-binding</keyword>
<keyword id="KW-0678">Repressor</keyword>
<keyword id="KW-0804">Transcription</keyword>
<keyword id="KW-0805">Transcription regulation</keyword>
<sequence length="94" mass="10875">MKNQEESGWQAFLTLCSKMQKEKFLQDLFSLFLSFGERKDVASRYHIIRALLEGELTQREIAEKYGVSIAQITRGSNALKGSDPQFKEFLQKEI</sequence>
<feature type="chain" id="PRO_1000197139" description="Trp operon repressor homolog">
    <location>
        <begin position="1"/>
        <end position="94"/>
    </location>
</feature>
<feature type="DNA-binding region" evidence="1">
    <location>
        <begin position="58"/>
        <end position="81"/>
    </location>
</feature>
<reference key="1">
    <citation type="journal article" date="2008" name="Genome Res.">
        <title>Chlamydia trachomatis: genome sequence analysis of lymphogranuloma venereum isolates.</title>
        <authorList>
            <person name="Thomson N.R."/>
            <person name="Holden M.T.G."/>
            <person name="Carder C."/>
            <person name="Lennard N."/>
            <person name="Lockey S.J."/>
            <person name="Marsh P."/>
            <person name="Skipp P."/>
            <person name="O'Connor C.D."/>
            <person name="Goodhead I."/>
            <person name="Norbertzcak H."/>
            <person name="Harris B."/>
            <person name="Ormond D."/>
            <person name="Rance R."/>
            <person name="Quail M.A."/>
            <person name="Parkhill J."/>
            <person name="Stephens R.S."/>
            <person name="Clarke I.N."/>
        </authorList>
    </citation>
    <scope>NUCLEOTIDE SEQUENCE [LARGE SCALE GENOMIC DNA]</scope>
    <source>
        <strain>ATCC VR-902B / DSM 19102 / 434/Bu</strain>
    </source>
</reference>
<proteinExistence type="inferred from homology"/>
<accession>B0B9S0</accession>
<evidence type="ECO:0000255" key="1">
    <source>
        <dbReference type="HAMAP-Rule" id="MF_00475"/>
    </source>
</evidence>
<dbReference type="EMBL" id="AM884176">
    <property type="protein sequence ID" value="CAP03860.1"/>
    <property type="molecule type" value="Genomic_DNA"/>
</dbReference>
<dbReference type="RefSeq" id="WP_009873611.1">
    <property type="nucleotide sequence ID" value="NC_010287.1"/>
</dbReference>
<dbReference type="RefSeq" id="YP_001654498.1">
    <property type="nucleotide sequence ID" value="NC_010287.1"/>
</dbReference>
<dbReference type="SMR" id="B0B9S0"/>
<dbReference type="KEGG" id="ctb:CTL0422"/>
<dbReference type="PATRIC" id="fig|471472.4.peg.457"/>
<dbReference type="HOGENOM" id="CLU_147939_0_2_0"/>
<dbReference type="Proteomes" id="UP001154402">
    <property type="component" value="Chromosome"/>
</dbReference>
<dbReference type="GO" id="GO:0005737">
    <property type="term" value="C:cytoplasm"/>
    <property type="evidence" value="ECO:0007669"/>
    <property type="project" value="UniProtKB-SubCell"/>
</dbReference>
<dbReference type="GO" id="GO:0003700">
    <property type="term" value="F:DNA-binding transcription factor activity"/>
    <property type="evidence" value="ECO:0007669"/>
    <property type="project" value="InterPro"/>
</dbReference>
<dbReference type="GO" id="GO:0043565">
    <property type="term" value="F:sequence-specific DNA binding"/>
    <property type="evidence" value="ECO:0007669"/>
    <property type="project" value="InterPro"/>
</dbReference>
<dbReference type="GO" id="GO:0045892">
    <property type="term" value="P:negative regulation of DNA-templated transcription"/>
    <property type="evidence" value="ECO:0007669"/>
    <property type="project" value="UniProtKB-UniRule"/>
</dbReference>
<dbReference type="Gene3D" id="1.10.1270.10">
    <property type="entry name" value="TrpR-like"/>
    <property type="match status" value="1"/>
</dbReference>
<dbReference type="HAMAP" id="MF_00475">
    <property type="entry name" value="Trp_repressor"/>
    <property type="match status" value="1"/>
</dbReference>
<dbReference type="InterPro" id="IPR000831">
    <property type="entry name" value="Trp_repress"/>
</dbReference>
<dbReference type="InterPro" id="IPR013335">
    <property type="entry name" value="Trp_repress_bac"/>
</dbReference>
<dbReference type="InterPro" id="IPR010921">
    <property type="entry name" value="Trp_repressor/repl_initiator"/>
</dbReference>
<dbReference type="InterPro" id="IPR038116">
    <property type="entry name" value="TrpR-like_sf"/>
</dbReference>
<dbReference type="NCBIfam" id="TIGR01321">
    <property type="entry name" value="TrpR"/>
    <property type="match status" value="1"/>
</dbReference>
<dbReference type="PANTHER" id="PTHR38025">
    <property type="entry name" value="TRP OPERON REPRESSOR"/>
    <property type="match status" value="1"/>
</dbReference>
<dbReference type="PANTHER" id="PTHR38025:SF1">
    <property type="entry name" value="TRP OPERON REPRESSOR"/>
    <property type="match status" value="1"/>
</dbReference>
<dbReference type="Pfam" id="PF01371">
    <property type="entry name" value="Trp_repressor"/>
    <property type="match status" value="1"/>
</dbReference>
<dbReference type="PIRSF" id="PIRSF003196">
    <property type="entry name" value="Trp_repressor"/>
    <property type="match status" value="1"/>
</dbReference>
<dbReference type="SUPFAM" id="SSF48295">
    <property type="entry name" value="TrpR-like"/>
    <property type="match status" value="1"/>
</dbReference>
<comment type="function">
    <text evidence="1">This protein is an aporepressor. When complexed with L-tryptophan it binds the operator region of the trp operon and prevents the initiation of transcription.</text>
</comment>
<comment type="subunit">
    <text evidence="1">Homodimer.</text>
</comment>
<comment type="subcellular location">
    <subcellularLocation>
        <location evidence="1">Cytoplasm</location>
    </subcellularLocation>
</comment>
<comment type="similarity">
    <text evidence="1">Belongs to the TrpR family.</text>
</comment>
<organism>
    <name type="scientific">Chlamydia trachomatis serovar L2 (strain ATCC VR-902B / DSM 19102 / 434/Bu)</name>
    <dbReference type="NCBI Taxonomy" id="471472"/>
    <lineage>
        <taxon>Bacteria</taxon>
        <taxon>Pseudomonadati</taxon>
        <taxon>Chlamydiota</taxon>
        <taxon>Chlamydiia</taxon>
        <taxon>Chlamydiales</taxon>
        <taxon>Chlamydiaceae</taxon>
        <taxon>Chlamydia/Chlamydophila group</taxon>
        <taxon>Chlamydia</taxon>
    </lineage>
</organism>
<name>TRPR_CHLT2</name>
<gene>
    <name evidence="1" type="primary">trpR</name>
    <name type="ordered locus">CTL0422</name>
</gene>
<protein>
    <recommendedName>
        <fullName evidence="1">Trp operon repressor homolog</fullName>
    </recommendedName>
</protein>